<dbReference type="EC" id="2.8.1.13" evidence="1"/>
<dbReference type="EMBL" id="CP000786">
    <property type="protein sequence ID" value="ABZ97450.1"/>
    <property type="molecule type" value="Genomic_DNA"/>
</dbReference>
<dbReference type="RefSeq" id="WP_012388331.1">
    <property type="nucleotide sequence ID" value="NC_010602.1"/>
</dbReference>
<dbReference type="SMR" id="B0SPC6"/>
<dbReference type="STRING" id="456481.LEPBI_I1340"/>
<dbReference type="KEGG" id="lbi:LEPBI_I1340"/>
<dbReference type="HOGENOM" id="CLU_035188_0_0_12"/>
<dbReference type="OrthoDB" id="9800696at2"/>
<dbReference type="BioCyc" id="LBIF456481:LEPBI_RS06570-MONOMER"/>
<dbReference type="Proteomes" id="UP000001847">
    <property type="component" value="Chromosome I"/>
</dbReference>
<dbReference type="GO" id="GO:0005737">
    <property type="term" value="C:cytoplasm"/>
    <property type="evidence" value="ECO:0007669"/>
    <property type="project" value="UniProtKB-SubCell"/>
</dbReference>
<dbReference type="GO" id="GO:0005524">
    <property type="term" value="F:ATP binding"/>
    <property type="evidence" value="ECO:0007669"/>
    <property type="project" value="UniProtKB-KW"/>
</dbReference>
<dbReference type="GO" id="GO:0000049">
    <property type="term" value="F:tRNA binding"/>
    <property type="evidence" value="ECO:0007669"/>
    <property type="project" value="UniProtKB-KW"/>
</dbReference>
<dbReference type="GO" id="GO:0103016">
    <property type="term" value="F:tRNA-uridine 2-sulfurtransferase activity"/>
    <property type="evidence" value="ECO:0007669"/>
    <property type="project" value="UniProtKB-EC"/>
</dbReference>
<dbReference type="GO" id="GO:0002143">
    <property type="term" value="P:tRNA wobble position uridine thiolation"/>
    <property type="evidence" value="ECO:0007669"/>
    <property type="project" value="TreeGrafter"/>
</dbReference>
<dbReference type="CDD" id="cd01998">
    <property type="entry name" value="MnmA_TRMU-like"/>
    <property type="match status" value="1"/>
</dbReference>
<dbReference type="FunFam" id="3.40.50.620:FF:000115">
    <property type="entry name" value="tRNA-specific 2-thiouridylase MnmA"/>
    <property type="match status" value="1"/>
</dbReference>
<dbReference type="Gene3D" id="2.30.30.280">
    <property type="entry name" value="Adenine nucleotide alpha hydrolases-like domains"/>
    <property type="match status" value="1"/>
</dbReference>
<dbReference type="Gene3D" id="3.40.50.620">
    <property type="entry name" value="HUPs"/>
    <property type="match status" value="1"/>
</dbReference>
<dbReference type="Gene3D" id="2.40.30.10">
    <property type="entry name" value="Translation factors"/>
    <property type="match status" value="1"/>
</dbReference>
<dbReference type="HAMAP" id="MF_00144">
    <property type="entry name" value="tRNA_thiouridyl_MnmA"/>
    <property type="match status" value="1"/>
</dbReference>
<dbReference type="InterPro" id="IPR004506">
    <property type="entry name" value="MnmA-like"/>
</dbReference>
<dbReference type="InterPro" id="IPR046885">
    <property type="entry name" value="MnmA-like_C"/>
</dbReference>
<dbReference type="InterPro" id="IPR046884">
    <property type="entry name" value="MnmA-like_central"/>
</dbReference>
<dbReference type="InterPro" id="IPR023382">
    <property type="entry name" value="MnmA-like_central_sf"/>
</dbReference>
<dbReference type="InterPro" id="IPR014729">
    <property type="entry name" value="Rossmann-like_a/b/a_fold"/>
</dbReference>
<dbReference type="NCBIfam" id="NF001138">
    <property type="entry name" value="PRK00143.1"/>
    <property type="match status" value="1"/>
</dbReference>
<dbReference type="NCBIfam" id="TIGR00420">
    <property type="entry name" value="trmU"/>
    <property type="match status" value="1"/>
</dbReference>
<dbReference type="PANTHER" id="PTHR11933:SF5">
    <property type="entry name" value="MITOCHONDRIAL TRNA-SPECIFIC 2-THIOURIDYLASE 1"/>
    <property type="match status" value="1"/>
</dbReference>
<dbReference type="PANTHER" id="PTHR11933">
    <property type="entry name" value="TRNA 5-METHYLAMINOMETHYL-2-THIOURIDYLATE -METHYLTRANSFERASE"/>
    <property type="match status" value="1"/>
</dbReference>
<dbReference type="Pfam" id="PF03054">
    <property type="entry name" value="tRNA_Me_trans"/>
    <property type="match status" value="1"/>
</dbReference>
<dbReference type="Pfam" id="PF20258">
    <property type="entry name" value="tRNA_Me_trans_C"/>
    <property type="match status" value="1"/>
</dbReference>
<dbReference type="Pfam" id="PF20259">
    <property type="entry name" value="tRNA_Me_trans_M"/>
    <property type="match status" value="1"/>
</dbReference>
<dbReference type="SUPFAM" id="SSF52402">
    <property type="entry name" value="Adenine nucleotide alpha hydrolases-like"/>
    <property type="match status" value="1"/>
</dbReference>
<evidence type="ECO:0000255" key="1">
    <source>
        <dbReference type="HAMAP-Rule" id="MF_00144"/>
    </source>
</evidence>
<accession>B0SPC6</accession>
<feature type="chain" id="PRO_0000349683" description="tRNA-specific 2-thiouridylase MnmA">
    <location>
        <begin position="1"/>
        <end position="380"/>
    </location>
</feature>
<feature type="region of interest" description="Interaction with tRNA" evidence="1">
    <location>
        <begin position="152"/>
        <end position="154"/>
    </location>
</feature>
<feature type="region of interest" description="Interaction with tRNA" evidence="1">
    <location>
        <begin position="308"/>
        <end position="309"/>
    </location>
</feature>
<feature type="active site" description="Nucleophile" evidence="1">
    <location>
        <position position="106"/>
    </location>
</feature>
<feature type="active site" description="Cysteine persulfide intermediate" evidence="1">
    <location>
        <position position="202"/>
    </location>
</feature>
<feature type="binding site" evidence="1">
    <location>
        <begin position="10"/>
        <end position="17"/>
    </location>
    <ligand>
        <name>ATP</name>
        <dbReference type="ChEBI" id="CHEBI:30616"/>
    </ligand>
</feature>
<feature type="binding site" evidence="1">
    <location>
        <position position="36"/>
    </location>
    <ligand>
        <name>ATP</name>
        <dbReference type="ChEBI" id="CHEBI:30616"/>
    </ligand>
</feature>
<feature type="binding site" evidence="1">
    <location>
        <position position="130"/>
    </location>
    <ligand>
        <name>ATP</name>
        <dbReference type="ChEBI" id="CHEBI:30616"/>
    </ligand>
</feature>
<feature type="site" description="Interaction with tRNA" evidence="1">
    <location>
        <position position="131"/>
    </location>
</feature>
<feature type="site" description="Interaction with tRNA" evidence="1">
    <location>
        <position position="340"/>
    </location>
</feature>
<feature type="disulfide bond" description="Alternate" evidence="1">
    <location>
        <begin position="106"/>
        <end position="202"/>
    </location>
</feature>
<keyword id="KW-0067">ATP-binding</keyword>
<keyword id="KW-0963">Cytoplasm</keyword>
<keyword id="KW-1015">Disulfide bond</keyword>
<keyword id="KW-0547">Nucleotide-binding</keyword>
<keyword id="KW-1185">Reference proteome</keyword>
<keyword id="KW-0694">RNA-binding</keyword>
<keyword id="KW-0808">Transferase</keyword>
<keyword id="KW-0819">tRNA processing</keyword>
<keyword id="KW-0820">tRNA-binding</keyword>
<sequence>MKEKEKIIVAMSGGVDSAVAAGLLMEAGYDVIGVNLRTWEYEAPACDTTKKSCCSPEDIRDARDVGLSLNIPFYVIKMEKVFGERVIDRFISDYKDGRTPNPCVECNTFVKFGALFEQAKKLGIDKIATGHYARVIEVDGRYAIRNAVDMKKNQTYYLYGLSQDNIKNTVFPLGEMDKSEVREIAKRMGLPVAEKPESQEICFIPENDYRSFLKKKGMEFTPGFFKLASGQIIGKHQGKEGFTIGQRKGLGIAWKNPLYVLSIEDDGTVVLGEEEETVSESFVLEEITYQALAPLALGQSMEMKVQIRYRSAPVHCKVTSLGETWKVNFLEDVKSVTPGQSATFYPTNGDYLFAGGIIQKGSITRKIKSNVEVQRESVPI</sequence>
<reference key="1">
    <citation type="journal article" date="2008" name="PLoS ONE">
        <title>Genome sequence of the saprophyte Leptospira biflexa provides insights into the evolution of Leptospira and the pathogenesis of leptospirosis.</title>
        <authorList>
            <person name="Picardeau M."/>
            <person name="Bulach D.M."/>
            <person name="Bouchier C."/>
            <person name="Zuerner R.L."/>
            <person name="Zidane N."/>
            <person name="Wilson P.J."/>
            <person name="Creno S."/>
            <person name="Kuczek E.S."/>
            <person name="Bommezzadri S."/>
            <person name="Davis J.C."/>
            <person name="McGrath A."/>
            <person name="Johnson M.J."/>
            <person name="Boursaux-Eude C."/>
            <person name="Seemann T."/>
            <person name="Rouy Z."/>
            <person name="Coppel R.L."/>
            <person name="Rood J.I."/>
            <person name="Lajus A."/>
            <person name="Davies J.K."/>
            <person name="Medigue C."/>
            <person name="Adler B."/>
        </authorList>
    </citation>
    <scope>NUCLEOTIDE SEQUENCE [LARGE SCALE GENOMIC DNA]</scope>
    <source>
        <strain>Patoc 1 / ATCC 23582 / Paris</strain>
    </source>
</reference>
<proteinExistence type="inferred from homology"/>
<organism>
    <name type="scientific">Leptospira biflexa serovar Patoc (strain Patoc 1 / ATCC 23582 / Paris)</name>
    <dbReference type="NCBI Taxonomy" id="456481"/>
    <lineage>
        <taxon>Bacteria</taxon>
        <taxon>Pseudomonadati</taxon>
        <taxon>Spirochaetota</taxon>
        <taxon>Spirochaetia</taxon>
        <taxon>Leptospirales</taxon>
        <taxon>Leptospiraceae</taxon>
        <taxon>Leptospira</taxon>
    </lineage>
</organism>
<protein>
    <recommendedName>
        <fullName evidence="1">tRNA-specific 2-thiouridylase MnmA</fullName>
        <ecNumber evidence="1">2.8.1.13</ecNumber>
    </recommendedName>
</protein>
<comment type="function">
    <text evidence="1">Catalyzes the 2-thiolation of uridine at the wobble position (U34) of tRNA, leading to the formation of s(2)U34.</text>
</comment>
<comment type="catalytic activity">
    <reaction evidence="1">
        <text>S-sulfanyl-L-cysteinyl-[protein] + uridine(34) in tRNA + AH2 + ATP = 2-thiouridine(34) in tRNA + L-cysteinyl-[protein] + A + AMP + diphosphate + H(+)</text>
        <dbReference type="Rhea" id="RHEA:47032"/>
        <dbReference type="Rhea" id="RHEA-COMP:10131"/>
        <dbReference type="Rhea" id="RHEA-COMP:11726"/>
        <dbReference type="Rhea" id="RHEA-COMP:11727"/>
        <dbReference type="Rhea" id="RHEA-COMP:11728"/>
        <dbReference type="ChEBI" id="CHEBI:13193"/>
        <dbReference type="ChEBI" id="CHEBI:15378"/>
        <dbReference type="ChEBI" id="CHEBI:17499"/>
        <dbReference type="ChEBI" id="CHEBI:29950"/>
        <dbReference type="ChEBI" id="CHEBI:30616"/>
        <dbReference type="ChEBI" id="CHEBI:33019"/>
        <dbReference type="ChEBI" id="CHEBI:61963"/>
        <dbReference type="ChEBI" id="CHEBI:65315"/>
        <dbReference type="ChEBI" id="CHEBI:87170"/>
        <dbReference type="ChEBI" id="CHEBI:456215"/>
        <dbReference type="EC" id="2.8.1.13"/>
    </reaction>
</comment>
<comment type="subcellular location">
    <subcellularLocation>
        <location evidence="1">Cytoplasm</location>
    </subcellularLocation>
</comment>
<comment type="similarity">
    <text evidence="1">Belongs to the MnmA/TRMU family.</text>
</comment>
<name>MNMA_LEPBP</name>
<gene>
    <name evidence="1" type="primary">mnmA</name>
    <name type="ordered locus">LEPBI_I1340</name>
</gene>